<feature type="chain" id="PRO_1000139764" description="Glucosamine-6-phosphate deaminase">
    <location>
        <begin position="1"/>
        <end position="249"/>
    </location>
</feature>
<feature type="active site" description="Proton acceptor; for enolization step" evidence="1">
    <location>
        <position position="67"/>
    </location>
</feature>
<feature type="active site" description="For ring-opening step" evidence="1">
    <location>
        <position position="136"/>
    </location>
</feature>
<feature type="active site" description="Proton acceptor; for ring-opening step" evidence="1">
    <location>
        <position position="138"/>
    </location>
</feature>
<feature type="active site" description="For ring-opening step" evidence="1">
    <location>
        <position position="143"/>
    </location>
</feature>
<reference key="1">
    <citation type="submission" date="2008-04" db="EMBL/GenBank/DDBJ databases">
        <title>Complete sequence of Clostridium botulinum strain Eklund.</title>
        <authorList>
            <person name="Brinkac L.M."/>
            <person name="Brown J.L."/>
            <person name="Bruce D."/>
            <person name="Detter C."/>
            <person name="Munk C."/>
            <person name="Smith L.A."/>
            <person name="Smith T.J."/>
            <person name="Sutton G."/>
            <person name="Brettin T.S."/>
        </authorList>
    </citation>
    <scope>NUCLEOTIDE SEQUENCE [LARGE SCALE GENOMIC DNA]</scope>
    <source>
        <strain>Eklund 17B / Type B</strain>
    </source>
</reference>
<protein>
    <recommendedName>
        <fullName evidence="1">Glucosamine-6-phosphate deaminase</fullName>
        <ecNumber evidence="1">3.5.99.6</ecNumber>
    </recommendedName>
    <alternativeName>
        <fullName evidence="1">GlcN6P deaminase</fullName>
        <shortName evidence="1">GNPDA</shortName>
    </alternativeName>
    <alternativeName>
        <fullName evidence="1">Glucosamine-6-phosphate isomerase</fullName>
    </alternativeName>
</protein>
<comment type="function">
    <text evidence="1">Catalyzes the reversible isomerization-deamination of glucosamine 6-phosphate (GlcN6P) to form fructose 6-phosphate (Fru6P) and ammonium ion.</text>
</comment>
<comment type="catalytic activity">
    <reaction evidence="1">
        <text>alpha-D-glucosamine 6-phosphate + H2O = beta-D-fructose 6-phosphate + NH4(+)</text>
        <dbReference type="Rhea" id="RHEA:12172"/>
        <dbReference type="ChEBI" id="CHEBI:15377"/>
        <dbReference type="ChEBI" id="CHEBI:28938"/>
        <dbReference type="ChEBI" id="CHEBI:57634"/>
        <dbReference type="ChEBI" id="CHEBI:75989"/>
        <dbReference type="EC" id="3.5.99.6"/>
    </reaction>
</comment>
<comment type="pathway">
    <text evidence="1">Amino-sugar metabolism; N-acetylneuraminate degradation; D-fructose 6-phosphate from N-acetylneuraminate: step 5/5.</text>
</comment>
<comment type="similarity">
    <text evidence="1">Belongs to the glucosamine/galactosamine-6-phosphate isomerase family. NagB subfamily.</text>
</comment>
<accession>B2TL69</accession>
<dbReference type="EC" id="3.5.99.6" evidence="1"/>
<dbReference type="EMBL" id="CP001056">
    <property type="protein sequence ID" value="ACD24826.1"/>
    <property type="molecule type" value="Genomic_DNA"/>
</dbReference>
<dbReference type="SMR" id="B2TL69"/>
<dbReference type="KEGG" id="cbk:CLL_A0717"/>
<dbReference type="PATRIC" id="fig|935198.13.peg.662"/>
<dbReference type="HOGENOM" id="CLU_049611_1_1_9"/>
<dbReference type="UniPathway" id="UPA00629">
    <property type="reaction ID" value="UER00684"/>
</dbReference>
<dbReference type="Proteomes" id="UP000001195">
    <property type="component" value="Chromosome"/>
</dbReference>
<dbReference type="GO" id="GO:0005737">
    <property type="term" value="C:cytoplasm"/>
    <property type="evidence" value="ECO:0007669"/>
    <property type="project" value="TreeGrafter"/>
</dbReference>
<dbReference type="GO" id="GO:0004342">
    <property type="term" value="F:glucosamine-6-phosphate deaminase activity"/>
    <property type="evidence" value="ECO:0007669"/>
    <property type="project" value="UniProtKB-UniRule"/>
</dbReference>
<dbReference type="GO" id="GO:0042802">
    <property type="term" value="F:identical protein binding"/>
    <property type="evidence" value="ECO:0007669"/>
    <property type="project" value="TreeGrafter"/>
</dbReference>
<dbReference type="GO" id="GO:0005975">
    <property type="term" value="P:carbohydrate metabolic process"/>
    <property type="evidence" value="ECO:0007669"/>
    <property type="project" value="InterPro"/>
</dbReference>
<dbReference type="GO" id="GO:0006043">
    <property type="term" value="P:glucosamine catabolic process"/>
    <property type="evidence" value="ECO:0007669"/>
    <property type="project" value="TreeGrafter"/>
</dbReference>
<dbReference type="GO" id="GO:0006046">
    <property type="term" value="P:N-acetylglucosamine catabolic process"/>
    <property type="evidence" value="ECO:0007669"/>
    <property type="project" value="TreeGrafter"/>
</dbReference>
<dbReference type="GO" id="GO:0019262">
    <property type="term" value="P:N-acetylneuraminate catabolic process"/>
    <property type="evidence" value="ECO:0007669"/>
    <property type="project" value="UniProtKB-UniRule"/>
</dbReference>
<dbReference type="CDD" id="cd01399">
    <property type="entry name" value="GlcN6P_deaminase"/>
    <property type="match status" value="1"/>
</dbReference>
<dbReference type="FunFam" id="3.40.50.1360:FF:000003">
    <property type="entry name" value="Glucosamine-6-phosphate deaminase"/>
    <property type="match status" value="1"/>
</dbReference>
<dbReference type="Gene3D" id="3.40.50.1360">
    <property type="match status" value="1"/>
</dbReference>
<dbReference type="HAMAP" id="MF_01241">
    <property type="entry name" value="GlcN6P_deamin"/>
    <property type="match status" value="1"/>
</dbReference>
<dbReference type="InterPro" id="IPR006148">
    <property type="entry name" value="Glc/Gal-6P_isomerase"/>
</dbReference>
<dbReference type="InterPro" id="IPR004547">
    <property type="entry name" value="Glucosamine6P_isomerase"/>
</dbReference>
<dbReference type="InterPro" id="IPR037171">
    <property type="entry name" value="NagB/RpiA_transferase-like"/>
</dbReference>
<dbReference type="NCBIfam" id="TIGR00502">
    <property type="entry name" value="nagB"/>
    <property type="match status" value="1"/>
</dbReference>
<dbReference type="NCBIfam" id="NF001684">
    <property type="entry name" value="PRK00443.1-4"/>
    <property type="match status" value="1"/>
</dbReference>
<dbReference type="PANTHER" id="PTHR11280">
    <property type="entry name" value="GLUCOSAMINE-6-PHOSPHATE ISOMERASE"/>
    <property type="match status" value="1"/>
</dbReference>
<dbReference type="PANTHER" id="PTHR11280:SF5">
    <property type="entry name" value="GLUCOSAMINE-6-PHOSPHATE ISOMERASE"/>
    <property type="match status" value="1"/>
</dbReference>
<dbReference type="Pfam" id="PF01182">
    <property type="entry name" value="Glucosamine_iso"/>
    <property type="match status" value="1"/>
</dbReference>
<dbReference type="SUPFAM" id="SSF100950">
    <property type="entry name" value="NagB/RpiA/CoA transferase-like"/>
    <property type="match status" value="1"/>
</dbReference>
<proteinExistence type="inferred from homology"/>
<sequence>MKILVCENYDKLSEKAAQIIMSQITLKSNSILGLATGSTPIGMYKKLVEMYENKMIDFSDVKTFNLDEYQNLPISNDQSYHYFMDDNLFNYINVKRENIYIPNGMANDIENECIKYDNLIKEAGGIDIQVLGIGNNAHIGFNEPTVNFEKKTYVVELEESTKIANARFFNSLDEVPSKAITMGIGSIFESKKIMLLATGENKAKAIYDTIYGKVTPEVPASILQFHDDLIVILDKEAASLLNPKDYKVV</sequence>
<evidence type="ECO:0000255" key="1">
    <source>
        <dbReference type="HAMAP-Rule" id="MF_01241"/>
    </source>
</evidence>
<name>NAGB_CLOBB</name>
<gene>
    <name evidence="1" type="primary">nagB</name>
    <name type="ordered locus">CLL_A0717</name>
</gene>
<organism>
    <name type="scientific">Clostridium botulinum (strain Eklund 17B / Type B)</name>
    <dbReference type="NCBI Taxonomy" id="935198"/>
    <lineage>
        <taxon>Bacteria</taxon>
        <taxon>Bacillati</taxon>
        <taxon>Bacillota</taxon>
        <taxon>Clostridia</taxon>
        <taxon>Eubacteriales</taxon>
        <taxon>Clostridiaceae</taxon>
        <taxon>Clostridium</taxon>
    </lineage>
</organism>
<keyword id="KW-0119">Carbohydrate metabolism</keyword>
<keyword id="KW-0378">Hydrolase</keyword>